<comment type="function">
    <text evidence="1">Catalyzes the folate-dependent formation of 5-methyl-uridine at position 54 (M-5-U54) in all tRNAs.</text>
</comment>
<comment type="catalytic activity">
    <reaction evidence="1">
        <text>uridine(54) in tRNA + (6R)-5,10-methylene-5,6,7,8-tetrahydrofolate + NADH + H(+) = 5-methyluridine(54) in tRNA + (6S)-5,6,7,8-tetrahydrofolate + NAD(+)</text>
        <dbReference type="Rhea" id="RHEA:16873"/>
        <dbReference type="Rhea" id="RHEA-COMP:10167"/>
        <dbReference type="Rhea" id="RHEA-COMP:10193"/>
        <dbReference type="ChEBI" id="CHEBI:15378"/>
        <dbReference type="ChEBI" id="CHEBI:15636"/>
        <dbReference type="ChEBI" id="CHEBI:57453"/>
        <dbReference type="ChEBI" id="CHEBI:57540"/>
        <dbReference type="ChEBI" id="CHEBI:57945"/>
        <dbReference type="ChEBI" id="CHEBI:65315"/>
        <dbReference type="ChEBI" id="CHEBI:74447"/>
        <dbReference type="EC" id="2.1.1.74"/>
    </reaction>
</comment>
<comment type="catalytic activity">
    <reaction evidence="1">
        <text>uridine(54) in tRNA + (6R)-5,10-methylene-5,6,7,8-tetrahydrofolate + NADPH + H(+) = 5-methyluridine(54) in tRNA + (6S)-5,6,7,8-tetrahydrofolate + NADP(+)</text>
        <dbReference type="Rhea" id="RHEA:62372"/>
        <dbReference type="Rhea" id="RHEA-COMP:10167"/>
        <dbReference type="Rhea" id="RHEA-COMP:10193"/>
        <dbReference type="ChEBI" id="CHEBI:15378"/>
        <dbReference type="ChEBI" id="CHEBI:15636"/>
        <dbReference type="ChEBI" id="CHEBI:57453"/>
        <dbReference type="ChEBI" id="CHEBI:57783"/>
        <dbReference type="ChEBI" id="CHEBI:58349"/>
        <dbReference type="ChEBI" id="CHEBI:65315"/>
        <dbReference type="ChEBI" id="CHEBI:74447"/>
        <dbReference type="EC" id="2.1.1.74"/>
    </reaction>
</comment>
<comment type="cofactor">
    <cofactor evidence="1">
        <name>FAD</name>
        <dbReference type="ChEBI" id="CHEBI:57692"/>
    </cofactor>
</comment>
<comment type="subcellular location">
    <subcellularLocation>
        <location evidence="1">Cytoplasm</location>
    </subcellularLocation>
</comment>
<comment type="similarity">
    <text evidence="1">Belongs to the MnmG family. TrmFO subfamily.</text>
</comment>
<feature type="chain" id="PRO_1000072977" description="Methylenetetrahydrofolate--tRNA-(uracil-5-)-methyltransferase TrmFO">
    <location>
        <begin position="1"/>
        <end position="436"/>
    </location>
</feature>
<feature type="binding site" evidence="1">
    <location>
        <begin position="9"/>
        <end position="14"/>
    </location>
    <ligand>
        <name>FAD</name>
        <dbReference type="ChEBI" id="CHEBI:57692"/>
    </ligand>
</feature>
<dbReference type="EC" id="2.1.1.74" evidence="1"/>
<dbReference type="EMBL" id="CP000568">
    <property type="protein sequence ID" value="ABN51699.1"/>
    <property type="molecule type" value="Genomic_DNA"/>
</dbReference>
<dbReference type="RefSeq" id="WP_003517940.1">
    <property type="nucleotide sequence ID" value="NC_009012.1"/>
</dbReference>
<dbReference type="SMR" id="A3DCM0"/>
<dbReference type="STRING" id="203119.Cthe_0461"/>
<dbReference type="GeneID" id="35805473"/>
<dbReference type="KEGG" id="cth:Cthe_0461"/>
<dbReference type="eggNOG" id="COG1206">
    <property type="taxonomic scope" value="Bacteria"/>
</dbReference>
<dbReference type="HOGENOM" id="CLU_033057_1_0_9"/>
<dbReference type="OrthoDB" id="9803114at2"/>
<dbReference type="Proteomes" id="UP000002145">
    <property type="component" value="Chromosome"/>
</dbReference>
<dbReference type="GO" id="GO:0005829">
    <property type="term" value="C:cytosol"/>
    <property type="evidence" value="ECO:0007669"/>
    <property type="project" value="TreeGrafter"/>
</dbReference>
<dbReference type="GO" id="GO:0050660">
    <property type="term" value="F:flavin adenine dinucleotide binding"/>
    <property type="evidence" value="ECO:0007669"/>
    <property type="project" value="UniProtKB-UniRule"/>
</dbReference>
<dbReference type="GO" id="GO:0047151">
    <property type="term" value="F:tRNA (uracil(54)-C5)-methyltransferase activity, 5,10-methylenetetrahydrofolate-dependent"/>
    <property type="evidence" value="ECO:0007669"/>
    <property type="project" value="UniProtKB-UniRule"/>
</dbReference>
<dbReference type="GO" id="GO:0030488">
    <property type="term" value="P:tRNA methylation"/>
    <property type="evidence" value="ECO:0007669"/>
    <property type="project" value="TreeGrafter"/>
</dbReference>
<dbReference type="GO" id="GO:0002098">
    <property type="term" value="P:tRNA wobble uridine modification"/>
    <property type="evidence" value="ECO:0007669"/>
    <property type="project" value="TreeGrafter"/>
</dbReference>
<dbReference type="FunFam" id="3.50.50.60:FF:000035">
    <property type="entry name" value="Methylenetetrahydrofolate--tRNA-(uracil-5-)-methyltransferase TrmFO"/>
    <property type="match status" value="1"/>
</dbReference>
<dbReference type="FunFam" id="3.50.50.60:FF:000040">
    <property type="entry name" value="Methylenetetrahydrofolate--tRNA-(uracil-5-)-methyltransferase TrmFO"/>
    <property type="match status" value="1"/>
</dbReference>
<dbReference type="Gene3D" id="3.50.50.60">
    <property type="entry name" value="FAD/NAD(P)-binding domain"/>
    <property type="match status" value="2"/>
</dbReference>
<dbReference type="HAMAP" id="MF_01037">
    <property type="entry name" value="TrmFO"/>
    <property type="match status" value="1"/>
</dbReference>
<dbReference type="InterPro" id="IPR036188">
    <property type="entry name" value="FAD/NAD-bd_sf"/>
</dbReference>
<dbReference type="InterPro" id="IPR002218">
    <property type="entry name" value="MnmG-rel"/>
</dbReference>
<dbReference type="InterPro" id="IPR020595">
    <property type="entry name" value="MnmG-rel_CS"/>
</dbReference>
<dbReference type="InterPro" id="IPR040131">
    <property type="entry name" value="MnmG_N"/>
</dbReference>
<dbReference type="InterPro" id="IPR004417">
    <property type="entry name" value="TrmFO"/>
</dbReference>
<dbReference type="NCBIfam" id="TIGR00137">
    <property type="entry name" value="gid_trmFO"/>
    <property type="match status" value="1"/>
</dbReference>
<dbReference type="NCBIfam" id="NF003739">
    <property type="entry name" value="PRK05335.1"/>
    <property type="match status" value="1"/>
</dbReference>
<dbReference type="PANTHER" id="PTHR11806">
    <property type="entry name" value="GLUCOSE INHIBITED DIVISION PROTEIN A"/>
    <property type="match status" value="1"/>
</dbReference>
<dbReference type="PANTHER" id="PTHR11806:SF2">
    <property type="entry name" value="METHYLENETETRAHYDROFOLATE--TRNA-(URACIL-5-)-METHYLTRANSFERASE TRMFO"/>
    <property type="match status" value="1"/>
</dbReference>
<dbReference type="Pfam" id="PF01134">
    <property type="entry name" value="GIDA"/>
    <property type="match status" value="1"/>
</dbReference>
<dbReference type="SUPFAM" id="SSF51905">
    <property type="entry name" value="FAD/NAD(P)-binding domain"/>
    <property type="match status" value="1"/>
</dbReference>
<dbReference type="PROSITE" id="PS01281">
    <property type="entry name" value="GIDA_2"/>
    <property type="match status" value="1"/>
</dbReference>
<organism>
    <name type="scientific">Acetivibrio thermocellus (strain ATCC 27405 / DSM 1237 / JCM 9322 / NBRC 103400 / NCIMB 10682 / NRRL B-4536 / VPI 7372)</name>
    <name type="common">Clostridium thermocellum</name>
    <dbReference type="NCBI Taxonomy" id="203119"/>
    <lineage>
        <taxon>Bacteria</taxon>
        <taxon>Bacillati</taxon>
        <taxon>Bacillota</taxon>
        <taxon>Clostridia</taxon>
        <taxon>Eubacteriales</taxon>
        <taxon>Oscillospiraceae</taxon>
        <taxon>Acetivibrio</taxon>
    </lineage>
</organism>
<sequence>MIDYINVIGAGLAGCEAAWQIAKRGIKVKLFEMKPKKFSPAHHMETFAELVCSNSLRSNQLENAVGLLKEEMRLLNSIIMKCADAAQVPAGGALAVDRTKFSQMVTELIKQNENIEVINEEVRELPKEGITIVATGPLTSGDLSKHLADFVGEGYLHFFDAAAPIVTFESIDMNKAFKAARYGRGTDDYINCPMNKEEYEIFWNELVNAELAEVKDFDREVVFEGCMPVETMAKRGKDTLRFGPLKPVGLVDPNTGKEPYAVVQLRQDNSEGTMYNMVGFQTRLKWPEQKRVFRLIPGLENAEFVRYGVMHRNTFINSPVLLDATYCLKKSPNIYFAGQITGVEGYVESASSGMVAGINAAMDFLGKDRVVFPKSTAIGALSHYVSDSSIKNFQPMNVNFGIMESFPLKIRDKRKRNYETAMRALKILKEYVSKYS</sequence>
<evidence type="ECO:0000255" key="1">
    <source>
        <dbReference type="HAMAP-Rule" id="MF_01037"/>
    </source>
</evidence>
<protein>
    <recommendedName>
        <fullName evidence="1">Methylenetetrahydrofolate--tRNA-(uracil-5-)-methyltransferase TrmFO</fullName>
        <ecNumber evidence="1">2.1.1.74</ecNumber>
    </recommendedName>
    <alternativeName>
        <fullName evidence="1">Folate-dependent tRNA (uracil-5-)-methyltransferase</fullName>
    </alternativeName>
    <alternativeName>
        <fullName evidence="1">Folate-dependent tRNA(M-5-U54)-methyltransferase</fullName>
    </alternativeName>
</protein>
<accession>A3DCM0</accession>
<proteinExistence type="inferred from homology"/>
<gene>
    <name evidence="1" type="primary">trmFO</name>
    <name type="synonym">gid</name>
    <name type="ordered locus">Cthe_0461</name>
</gene>
<keyword id="KW-0963">Cytoplasm</keyword>
<keyword id="KW-0274">FAD</keyword>
<keyword id="KW-0285">Flavoprotein</keyword>
<keyword id="KW-0489">Methyltransferase</keyword>
<keyword id="KW-0520">NAD</keyword>
<keyword id="KW-0521">NADP</keyword>
<keyword id="KW-1185">Reference proteome</keyword>
<keyword id="KW-0808">Transferase</keyword>
<keyword id="KW-0819">tRNA processing</keyword>
<name>TRMFO_ACET2</name>
<reference key="1">
    <citation type="submission" date="2007-02" db="EMBL/GenBank/DDBJ databases">
        <title>Complete sequence of Clostridium thermocellum ATCC 27405.</title>
        <authorList>
            <consortium name="US DOE Joint Genome Institute"/>
            <person name="Copeland A."/>
            <person name="Lucas S."/>
            <person name="Lapidus A."/>
            <person name="Barry K."/>
            <person name="Detter J.C."/>
            <person name="Glavina del Rio T."/>
            <person name="Hammon N."/>
            <person name="Israni S."/>
            <person name="Dalin E."/>
            <person name="Tice H."/>
            <person name="Pitluck S."/>
            <person name="Chertkov O."/>
            <person name="Brettin T."/>
            <person name="Bruce D."/>
            <person name="Han C."/>
            <person name="Tapia R."/>
            <person name="Gilna P."/>
            <person name="Schmutz J."/>
            <person name="Larimer F."/>
            <person name="Land M."/>
            <person name="Hauser L."/>
            <person name="Kyrpides N."/>
            <person name="Mikhailova N."/>
            <person name="Wu J.H.D."/>
            <person name="Newcomb M."/>
            <person name="Richardson P."/>
        </authorList>
    </citation>
    <scope>NUCLEOTIDE SEQUENCE [LARGE SCALE GENOMIC DNA]</scope>
    <source>
        <strain>ATCC 27405 / DSM 1237 / JCM 9322 / NBRC 103400 / NCIMB 10682 / NRRL B-4536 / VPI 7372</strain>
    </source>
</reference>